<keyword id="KW-0027">Amidation</keyword>
<keyword id="KW-0903">Direct protein sequencing</keyword>
<keyword id="KW-0527">Neuropeptide</keyword>
<keyword id="KW-0964">Secreted</keyword>
<protein>
    <recommendedName>
        <fullName>Ranatachykinin-C</fullName>
        <shortName>RTK C</shortName>
    </recommendedName>
</protein>
<reference key="1">
    <citation type="journal article" date="1991" name="Biochem. Biophys. Res. Commun.">
        <title>Isolation of four novel tachykinins from frog (Rana catesbeiana) brain and intestine.</title>
        <authorList>
            <person name="Kozawa H."/>
            <person name="Hino J."/>
            <person name="Minamino N."/>
            <person name="Kangawa K."/>
            <person name="Matsuo H."/>
        </authorList>
    </citation>
    <scope>PROTEIN SEQUENCE</scope>
    <scope>SYNTHESIS</scope>
    <scope>AMIDATION AT MET-10</scope>
    <source>
        <tissue>Intestine</tissue>
    </source>
</reference>
<reference key="2">
    <citation type="journal article" date="1993" name="Regul. Pept.">
        <title>Four novel tachykinins in frog (Rana catesbeiana) brain and intestine.</title>
        <authorList>
            <person name="Kangawa K."/>
            <person name="Kozawa H."/>
            <person name="Hino J."/>
            <person name="Minamino N."/>
            <person name="Matsuo H."/>
        </authorList>
    </citation>
    <scope>PROTEIN SEQUENCE</scope>
    <source>
        <tissue>Intestine</tissue>
    </source>
</reference>
<name>TKNC_AQUCT</name>
<organism>
    <name type="scientific">Aquarana catesbeiana</name>
    <name type="common">American bullfrog</name>
    <name type="synonym">Rana catesbeiana</name>
    <dbReference type="NCBI Taxonomy" id="8400"/>
    <lineage>
        <taxon>Eukaryota</taxon>
        <taxon>Metazoa</taxon>
        <taxon>Chordata</taxon>
        <taxon>Craniata</taxon>
        <taxon>Vertebrata</taxon>
        <taxon>Euteleostomi</taxon>
        <taxon>Amphibia</taxon>
        <taxon>Batrachia</taxon>
        <taxon>Anura</taxon>
        <taxon>Neobatrachia</taxon>
        <taxon>Ranoidea</taxon>
        <taxon>Ranidae</taxon>
        <taxon>Aquarana</taxon>
    </lineage>
</organism>
<evidence type="ECO:0000269" key="1">
    <source>
    </source>
</evidence>
<evidence type="ECO:0000305" key="2"/>
<accession>P22690</accession>
<sequence>HNPASFIGLM</sequence>
<dbReference type="PIR" id="C61033">
    <property type="entry name" value="C61033"/>
</dbReference>
<dbReference type="GO" id="GO:0005576">
    <property type="term" value="C:extracellular region"/>
    <property type="evidence" value="ECO:0007669"/>
    <property type="project" value="UniProtKB-SubCell"/>
</dbReference>
<dbReference type="GO" id="GO:0007218">
    <property type="term" value="P:neuropeptide signaling pathway"/>
    <property type="evidence" value="ECO:0007669"/>
    <property type="project" value="UniProtKB-KW"/>
</dbReference>
<dbReference type="InterPro" id="IPR013055">
    <property type="entry name" value="Tachy_Neuro_lke_CS"/>
</dbReference>
<dbReference type="PROSITE" id="PS00267">
    <property type="entry name" value="TACHYKININ"/>
    <property type="match status" value="1"/>
</dbReference>
<proteinExistence type="evidence at protein level"/>
<comment type="function">
    <text>Tachykinins are active peptides which excite neurons, evoke behavioral responses, are potent vasodilators and secretagogues, and contract (directly or indirectly) many smooth muscles.</text>
</comment>
<comment type="subcellular location">
    <subcellularLocation>
        <location>Secreted</location>
    </subcellularLocation>
</comment>
<comment type="similarity">
    <text evidence="2">Belongs to the tachykinin family.</text>
</comment>
<feature type="peptide" id="PRO_0000044407" description="Ranatachykinin-C">
    <location>
        <begin position="1"/>
        <end position="10"/>
    </location>
</feature>
<feature type="modified residue" description="Methionine amide" evidence="1">
    <location>
        <position position="10"/>
    </location>
</feature>